<reference key="1">
    <citation type="submission" date="2007-06" db="EMBL/GenBank/DDBJ databases">
        <title>Complete sequence of Clostridium beijerinckii NCIMB 8052.</title>
        <authorList>
            <consortium name="US DOE Joint Genome Institute"/>
            <person name="Copeland A."/>
            <person name="Lucas S."/>
            <person name="Lapidus A."/>
            <person name="Barry K."/>
            <person name="Detter J.C."/>
            <person name="Glavina del Rio T."/>
            <person name="Hammon N."/>
            <person name="Israni S."/>
            <person name="Dalin E."/>
            <person name="Tice H."/>
            <person name="Pitluck S."/>
            <person name="Sims D."/>
            <person name="Brettin T."/>
            <person name="Bruce D."/>
            <person name="Tapia R."/>
            <person name="Brainard J."/>
            <person name="Schmutz J."/>
            <person name="Larimer F."/>
            <person name="Land M."/>
            <person name="Hauser L."/>
            <person name="Kyrpides N."/>
            <person name="Mikhailova N."/>
            <person name="Bennet G."/>
            <person name="Cann I."/>
            <person name="Chen J.-S."/>
            <person name="Contreras A.L."/>
            <person name="Jones D."/>
            <person name="Kashket E."/>
            <person name="Mitchell W."/>
            <person name="Stoddard S."/>
            <person name="Schwarz W."/>
            <person name="Qureshi N."/>
            <person name="Young M."/>
            <person name="Shi Z."/>
            <person name="Ezeji T."/>
            <person name="White B."/>
            <person name="Blaschek H."/>
            <person name="Richardson P."/>
        </authorList>
    </citation>
    <scope>NUCLEOTIDE SEQUENCE [LARGE SCALE GENOMIC DNA]</scope>
    <source>
        <strain>ATCC 51743 / NCIMB 8052</strain>
    </source>
</reference>
<evidence type="ECO:0000255" key="1">
    <source>
        <dbReference type="HAMAP-Rule" id="MF_01227"/>
    </source>
</evidence>
<protein>
    <recommendedName>
        <fullName evidence="1">CTP synthase</fullName>
        <ecNumber evidence="1">6.3.4.2</ecNumber>
    </recommendedName>
    <alternativeName>
        <fullName evidence="1">Cytidine 5'-triphosphate synthase</fullName>
    </alternativeName>
    <alternativeName>
        <fullName evidence="1">Cytidine triphosphate synthetase</fullName>
        <shortName evidence="1">CTP synthetase</shortName>
        <shortName evidence="1">CTPS</shortName>
    </alternativeName>
    <alternativeName>
        <fullName evidence="1">UTP--ammonia ligase</fullName>
    </alternativeName>
</protein>
<sequence>MSTKYVFVTGGVVSALGKGITAASLGRLLKNRGVKISIQKFDPYLNVDPGTMSPYQHGEVFVTDDGAETDLDLGHYERFIDESLTQNSNVTTGKIYSSVIEKERRGEYLGGTVQVIPHITNAIKDKVYQVAKDRDVDVVITEIGGTVGDIESQPFLESIRQIKSEVGAENVCYIHVTLVPYLGKAGELKTKPTQHSVKELRMIGIQPDIIVCRTEKELSDDVKAKIGLFCNIDGRSVIQNLDAENLYEVPLMLHSEGLDNLVCEKLHLGCKDIDNSEWIQMVQKIKNLKNNVKIALVGKYVELHDAYISVVEALSHGGYANNTNVEIKWINAENIENSNAQELLKDVDGILVPGGFGDRGIEGKIAAIKWARENKKPFLGICLGMQCAVIEYARSVLGYEDANSSEINPGTNYPVIDLMPDQKDIENLGGTMRLGLYPCRLAENTNSYEVYKNEIINERHRHRYEFNNEFRKQITEAGMKIAGTSPDERLVEIVEVEDHPWYVAVQFHPELKSRPNKPHKLFVGFIKAALEENKSK</sequence>
<comment type="function">
    <text evidence="1">Catalyzes the ATP-dependent amination of UTP to CTP with either L-glutamine or ammonia as the source of nitrogen. Regulates intracellular CTP levels through interactions with the four ribonucleotide triphosphates.</text>
</comment>
<comment type="catalytic activity">
    <reaction evidence="1">
        <text>UTP + L-glutamine + ATP + H2O = CTP + L-glutamate + ADP + phosphate + 2 H(+)</text>
        <dbReference type="Rhea" id="RHEA:26426"/>
        <dbReference type="ChEBI" id="CHEBI:15377"/>
        <dbReference type="ChEBI" id="CHEBI:15378"/>
        <dbReference type="ChEBI" id="CHEBI:29985"/>
        <dbReference type="ChEBI" id="CHEBI:30616"/>
        <dbReference type="ChEBI" id="CHEBI:37563"/>
        <dbReference type="ChEBI" id="CHEBI:43474"/>
        <dbReference type="ChEBI" id="CHEBI:46398"/>
        <dbReference type="ChEBI" id="CHEBI:58359"/>
        <dbReference type="ChEBI" id="CHEBI:456216"/>
        <dbReference type="EC" id="6.3.4.2"/>
    </reaction>
</comment>
<comment type="catalytic activity">
    <reaction evidence="1">
        <text>L-glutamine + H2O = L-glutamate + NH4(+)</text>
        <dbReference type="Rhea" id="RHEA:15889"/>
        <dbReference type="ChEBI" id="CHEBI:15377"/>
        <dbReference type="ChEBI" id="CHEBI:28938"/>
        <dbReference type="ChEBI" id="CHEBI:29985"/>
        <dbReference type="ChEBI" id="CHEBI:58359"/>
    </reaction>
</comment>
<comment type="catalytic activity">
    <reaction evidence="1">
        <text>UTP + NH4(+) + ATP = CTP + ADP + phosphate + 2 H(+)</text>
        <dbReference type="Rhea" id="RHEA:16597"/>
        <dbReference type="ChEBI" id="CHEBI:15378"/>
        <dbReference type="ChEBI" id="CHEBI:28938"/>
        <dbReference type="ChEBI" id="CHEBI:30616"/>
        <dbReference type="ChEBI" id="CHEBI:37563"/>
        <dbReference type="ChEBI" id="CHEBI:43474"/>
        <dbReference type="ChEBI" id="CHEBI:46398"/>
        <dbReference type="ChEBI" id="CHEBI:456216"/>
    </reaction>
</comment>
<comment type="activity regulation">
    <text evidence="1">Allosterically activated by GTP, when glutamine is the substrate; GTP has no effect on the reaction when ammonia is the substrate. The allosteric effector GTP functions by stabilizing the protein conformation that binds the tetrahedral intermediate(s) formed during glutamine hydrolysis. Inhibited by the product CTP, via allosteric rather than competitive inhibition.</text>
</comment>
<comment type="pathway">
    <text evidence="1">Pyrimidine metabolism; CTP biosynthesis via de novo pathway; CTP from UDP: step 2/2.</text>
</comment>
<comment type="subunit">
    <text evidence="1">Homotetramer.</text>
</comment>
<comment type="miscellaneous">
    <text evidence="1">CTPSs have evolved a hybrid strategy for distinguishing between UTP and CTP. The overlapping regions of the product feedback inhibitory and substrate sites recognize a common feature in both compounds, the triphosphate moiety. To differentiate isosteric substrate and product pyrimidine rings, an additional pocket far from the expected kinase/ligase catalytic site, specifically recognizes the cytosine and ribose portions of the product inhibitor.</text>
</comment>
<comment type="similarity">
    <text evidence="1">Belongs to the CTP synthase family.</text>
</comment>
<keyword id="KW-0067">ATP-binding</keyword>
<keyword id="KW-0315">Glutamine amidotransferase</keyword>
<keyword id="KW-0436">Ligase</keyword>
<keyword id="KW-0460">Magnesium</keyword>
<keyword id="KW-0479">Metal-binding</keyword>
<keyword id="KW-0547">Nucleotide-binding</keyword>
<keyword id="KW-0665">Pyrimidine biosynthesis</keyword>
<organism>
    <name type="scientific">Clostridium beijerinckii (strain ATCC 51743 / NCIMB 8052)</name>
    <name type="common">Clostridium acetobutylicum</name>
    <dbReference type="NCBI Taxonomy" id="290402"/>
    <lineage>
        <taxon>Bacteria</taxon>
        <taxon>Bacillati</taxon>
        <taxon>Bacillota</taxon>
        <taxon>Clostridia</taxon>
        <taxon>Eubacteriales</taxon>
        <taxon>Clostridiaceae</taxon>
        <taxon>Clostridium</taxon>
    </lineage>
</organism>
<name>PYRG_CLOB8</name>
<feature type="chain" id="PRO_1000139422" description="CTP synthase">
    <location>
        <begin position="1"/>
        <end position="536"/>
    </location>
</feature>
<feature type="domain" description="Glutamine amidotransferase type-1" evidence="1">
    <location>
        <begin position="293"/>
        <end position="535"/>
    </location>
</feature>
<feature type="region of interest" description="Amidoligase domain" evidence="1">
    <location>
        <begin position="1"/>
        <end position="268"/>
    </location>
</feature>
<feature type="active site" description="Nucleophile; for glutamine hydrolysis" evidence="1">
    <location>
        <position position="382"/>
    </location>
</feature>
<feature type="active site" evidence="1">
    <location>
        <position position="508"/>
    </location>
</feature>
<feature type="active site" evidence="1">
    <location>
        <position position="510"/>
    </location>
</feature>
<feature type="binding site" evidence="1">
    <location>
        <position position="14"/>
    </location>
    <ligand>
        <name>CTP</name>
        <dbReference type="ChEBI" id="CHEBI:37563"/>
        <note>allosteric inhibitor</note>
    </ligand>
</feature>
<feature type="binding site" evidence="1">
    <location>
        <position position="14"/>
    </location>
    <ligand>
        <name>UTP</name>
        <dbReference type="ChEBI" id="CHEBI:46398"/>
    </ligand>
</feature>
<feature type="binding site" evidence="1">
    <location>
        <begin position="15"/>
        <end position="20"/>
    </location>
    <ligand>
        <name>ATP</name>
        <dbReference type="ChEBI" id="CHEBI:30616"/>
    </ligand>
</feature>
<feature type="binding site" evidence="1">
    <location>
        <position position="55"/>
    </location>
    <ligand>
        <name>L-glutamine</name>
        <dbReference type="ChEBI" id="CHEBI:58359"/>
    </ligand>
</feature>
<feature type="binding site" evidence="1">
    <location>
        <position position="72"/>
    </location>
    <ligand>
        <name>ATP</name>
        <dbReference type="ChEBI" id="CHEBI:30616"/>
    </ligand>
</feature>
<feature type="binding site" evidence="1">
    <location>
        <position position="72"/>
    </location>
    <ligand>
        <name>Mg(2+)</name>
        <dbReference type="ChEBI" id="CHEBI:18420"/>
    </ligand>
</feature>
<feature type="binding site" evidence="1">
    <location>
        <position position="142"/>
    </location>
    <ligand>
        <name>Mg(2+)</name>
        <dbReference type="ChEBI" id="CHEBI:18420"/>
    </ligand>
</feature>
<feature type="binding site" evidence="1">
    <location>
        <begin position="149"/>
        <end position="151"/>
    </location>
    <ligand>
        <name>CTP</name>
        <dbReference type="ChEBI" id="CHEBI:37563"/>
        <note>allosteric inhibitor</note>
    </ligand>
</feature>
<feature type="binding site" evidence="1">
    <location>
        <begin position="189"/>
        <end position="194"/>
    </location>
    <ligand>
        <name>CTP</name>
        <dbReference type="ChEBI" id="CHEBI:37563"/>
        <note>allosteric inhibitor</note>
    </ligand>
</feature>
<feature type="binding site" evidence="1">
    <location>
        <begin position="189"/>
        <end position="194"/>
    </location>
    <ligand>
        <name>UTP</name>
        <dbReference type="ChEBI" id="CHEBI:46398"/>
    </ligand>
</feature>
<feature type="binding site" evidence="1">
    <location>
        <position position="225"/>
    </location>
    <ligand>
        <name>CTP</name>
        <dbReference type="ChEBI" id="CHEBI:37563"/>
        <note>allosteric inhibitor</note>
    </ligand>
</feature>
<feature type="binding site" evidence="1">
    <location>
        <position position="225"/>
    </location>
    <ligand>
        <name>UTP</name>
        <dbReference type="ChEBI" id="CHEBI:46398"/>
    </ligand>
</feature>
<feature type="binding site" evidence="1">
    <location>
        <position position="355"/>
    </location>
    <ligand>
        <name>L-glutamine</name>
        <dbReference type="ChEBI" id="CHEBI:58359"/>
    </ligand>
</feature>
<feature type="binding site" evidence="1">
    <location>
        <begin position="383"/>
        <end position="386"/>
    </location>
    <ligand>
        <name>L-glutamine</name>
        <dbReference type="ChEBI" id="CHEBI:58359"/>
    </ligand>
</feature>
<feature type="binding site" evidence="1">
    <location>
        <position position="406"/>
    </location>
    <ligand>
        <name>L-glutamine</name>
        <dbReference type="ChEBI" id="CHEBI:58359"/>
    </ligand>
</feature>
<feature type="binding site" evidence="1">
    <location>
        <position position="463"/>
    </location>
    <ligand>
        <name>L-glutamine</name>
        <dbReference type="ChEBI" id="CHEBI:58359"/>
    </ligand>
</feature>
<accession>A6LQF6</accession>
<proteinExistence type="inferred from homology"/>
<gene>
    <name evidence="1" type="primary">pyrG</name>
    <name type="ordered locus">Cbei_0398</name>
</gene>
<dbReference type="EC" id="6.3.4.2" evidence="1"/>
<dbReference type="EMBL" id="CP000721">
    <property type="protein sequence ID" value="ABR32586.1"/>
    <property type="molecule type" value="Genomic_DNA"/>
</dbReference>
<dbReference type="RefSeq" id="WP_011967747.1">
    <property type="nucleotide sequence ID" value="NC_009617.1"/>
</dbReference>
<dbReference type="SMR" id="A6LQF6"/>
<dbReference type="MEROPS" id="C26.964"/>
<dbReference type="KEGG" id="cbe:Cbei_0398"/>
<dbReference type="eggNOG" id="COG0504">
    <property type="taxonomic scope" value="Bacteria"/>
</dbReference>
<dbReference type="HOGENOM" id="CLU_011675_5_0_9"/>
<dbReference type="UniPathway" id="UPA00159">
    <property type="reaction ID" value="UER00277"/>
</dbReference>
<dbReference type="Proteomes" id="UP000000565">
    <property type="component" value="Chromosome"/>
</dbReference>
<dbReference type="GO" id="GO:0005829">
    <property type="term" value="C:cytosol"/>
    <property type="evidence" value="ECO:0007669"/>
    <property type="project" value="TreeGrafter"/>
</dbReference>
<dbReference type="GO" id="GO:0005524">
    <property type="term" value="F:ATP binding"/>
    <property type="evidence" value="ECO:0007669"/>
    <property type="project" value="UniProtKB-KW"/>
</dbReference>
<dbReference type="GO" id="GO:0003883">
    <property type="term" value="F:CTP synthase activity"/>
    <property type="evidence" value="ECO:0007669"/>
    <property type="project" value="UniProtKB-UniRule"/>
</dbReference>
<dbReference type="GO" id="GO:0004359">
    <property type="term" value="F:glutaminase activity"/>
    <property type="evidence" value="ECO:0007669"/>
    <property type="project" value="RHEA"/>
</dbReference>
<dbReference type="GO" id="GO:0042802">
    <property type="term" value="F:identical protein binding"/>
    <property type="evidence" value="ECO:0007669"/>
    <property type="project" value="TreeGrafter"/>
</dbReference>
<dbReference type="GO" id="GO:0046872">
    <property type="term" value="F:metal ion binding"/>
    <property type="evidence" value="ECO:0007669"/>
    <property type="project" value="UniProtKB-KW"/>
</dbReference>
<dbReference type="GO" id="GO:0044210">
    <property type="term" value="P:'de novo' CTP biosynthetic process"/>
    <property type="evidence" value="ECO:0007669"/>
    <property type="project" value="UniProtKB-UniRule"/>
</dbReference>
<dbReference type="GO" id="GO:0019856">
    <property type="term" value="P:pyrimidine nucleobase biosynthetic process"/>
    <property type="evidence" value="ECO:0007669"/>
    <property type="project" value="TreeGrafter"/>
</dbReference>
<dbReference type="CDD" id="cd03113">
    <property type="entry name" value="CTPS_N"/>
    <property type="match status" value="1"/>
</dbReference>
<dbReference type="CDD" id="cd01746">
    <property type="entry name" value="GATase1_CTP_Synthase"/>
    <property type="match status" value="1"/>
</dbReference>
<dbReference type="FunFam" id="3.40.50.300:FF:000009">
    <property type="entry name" value="CTP synthase"/>
    <property type="match status" value="1"/>
</dbReference>
<dbReference type="FunFam" id="3.40.50.880:FF:000002">
    <property type="entry name" value="CTP synthase"/>
    <property type="match status" value="1"/>
</dbReference>
<dbReference type="Gene3D" id="3.40.50.880">
    <property type="match status" value="1"/>
</dbReference>
<dbReference type="Gene3D" id="3.40.50.300">
    <property type="entry name" value="P-loop containing nucleotide triphosphate hydrolases"/>
    <property type="match status" value="1"/>
</dbReference>
<dbReference type="HAMAP" id="MF_01227">
    <property type="entry name" value="PyrG"/>
    <property type="match status" value="1"/>
</dbReference>
<dbReference type="InterPro" id="IPR029062">
    <property type="entry name" value="Class_I_gatase-like"/>
</dbReference>
<dbReference type="InterPro" id="IPR004468">
    <property type="entry name" value="CTP_synthase"/>
</dbReference>
<dbReference type="InterPro" id="IPR017456">
    <property type="entry name" value="CTP_synthase_N"/>
</dbReference>
<dbReference type="InterPro" id="IPR017926">
    <property type="entry name" value="GATASE"/>
</dbReference>
<dbReference type="InterPro" id="IPR033828">
    <property type="entry name" value="GATase1_CTP_Synthase"/>
</dbReference>
<dbReference type="InterPro" id="IPR027417">
    <property type="entry name" value="P-loop_NTPase"/>
</dbReference>
<dbReference type="NCBIfam" id="NF003792">
    <property type="entry name" value="PRK05380.1"/>
    <property type="match status" value="1"/>
</dbReference>
<dbReference type="NCBIfam" id="TIGR00337">
    <property type="entry name" value="PyrG"/>
    <property type="match status" value="1"/>
</dbReference>
<dbReference type="PANTHER" id="PTHR11550">
    <property type="entry name" value="CTP SYNTHASE"/>
    <property type="match status" value="1"/>
</dbReference>
<dbReference type="PANTHER" id="PTHR11550:SF0">
    <property type="entry name" value="CTP SYNTHASE-RELATED"/>
    <property type="match status" value="1"/>
</dbReference>
<dbReference type="Pfam" id="PF06418">
    <property type="entry name" value="CTP_synth_N"/>
    <property type="match status" value="1"/>
</dbReference>
<dbReference type="Pfam" id="PF00117">
    <property type="entry name" value="GATase"/>
    <property type="match status" value="1"/>
</dbReference>
<dbReference type="SUPFAM" id="SSF52317">
    <property type="entry name" value="Class I glutamine amidotransferase-like"/>
    <property type="match status" value="1"/>
</dbReference>
<dbReference type="SUPFAM" id="SSF52540">
    <property type="entry name" value="P-loop containing nucleoside triphosphate hydrolases"/>
    <property type="match status" value="1"/>
</dbReference>
<dbReference type="PROSITE" id="PS51273">
    <property type="entry name" value="GATASE_TYPE_1"/>
    <property type="match status" value="1"/>
</dbReference>